<dbReference type="EC" id="4.2.3.5" evidence="1"/>
<dbReference type="EMBL" id="AP009384">
    <property type="protein sequence ID" value="BAF87747.1"/>
    <property type="molecule type" value="Genomic_DNA"/>
</dbReference>
<dbReference type="RefSeq" id="WP_012170277.1">
    <property type="nucleotide sequence ID" value="NC_009937.1"/>
</dbReference>
<dbReference type="SMR" id="A8I4M5"/>
<dbReference type="STRING" id="438753.AZC_1749"/>
<dbReference type="KEGG" id="azc:AZC_1749"/>
<dbReference type="eggNOG" id="COG0082">
    <property type="taxonomic scope" value="Bacteria"/>
</dbReference>
<dbReference type="HOGENOM" id="CLU_034547_0_0_5"/>
<dbReference type="UniPathway" id="UPA00053">
    <property type="reaction ID" value="UER00090"/>
</dbReference>
<dbReference type="Proteomes" id="UP000000270">
    <property type="component" value="Chromosome"/>
</dbReference>
<dbReference type="GO" id="GO:0005829">
    <property type="term" value="C:cytosol"/>
    <property type="evidence" value="ECO:0007669"/>
    <property type="project" value="TreeGrafter"/>
</dbReference>
<dbReference type="GO" id="GO:0004107">
    <property type="term" value="F:chorismate synthase activity"/>
    <property type="evidence" value="ECO:0007669"/>
    <property type="project" value="UniProtKB-UniRule"/>
</dbReference>
<dbReference type="GO" id="GO:0010181">
    <property type="term" value="F:FMN binding"/>
    <property type="evidence" value="ECO:0007669"/>
    <property type="project" value="TreeGrafter"/>
</dbReference>
<dbReference type="GO" id="GO:0008652">
    <property type="term" value="P:amino acid biosynthetic process"/>
    <property type="evidence" value="ECO:0007669"/>
    <property type="project" value="UniProtKB-KW"/>
</dbReference>
<dbReference type="GO" id="GO:0009073">
    <property type="term" value="P:aromatic amino acid family biosynthetic process"/>
    <property type="evidence" value="ECO:0007669"/>
    <property type="project" value="UniProtKB-KW"/>
</dbReference>
<dbReference type="GO" id="GO:0009423">
    <property type="term" value="P:chorismate biosynthetic process"/>
    <property type="evidence" value="ECO:0007669"/>
    <property type="project" value="UniProtKB-UniRule"/>
</dbReference>
<dbReference type="CDD" id="cd07304">
    <property type="entry name" value="Chorismate_synthase"/>
    <property type="match status" value="1"/>
</dbReference>
<dbReference type="Gene3D" id="3.60.150.10">
    <property type="entry name" value="Chorismate synthase AroC"/>
    <property type="match status" value="1"/>
</dbReference>
<dbReference type="HAMAP" id="MF_00300">
    <property type="entry name" value="Chorismate_synth"/>
    <property type="match status" value="1"/>
</dbReference>
<dbReference type="InterPro" id="IPR000453">
    <property type="entry name" value="Chorismate_synth"/>
</dbReference>
<dbReference type="InterPro" id="IPR035904">
    <property type="entry name" value="Chorismate_synth_AroC_sf"/>
</dbReference>
<dbReference type="InterPro" id="IPR020541">
    <property type="entry name" value="Chorismate_synthase_CS"/>
</dbReference>
<dbReference type="NCBIfam" id="TIGR00033">
    <property type="entry name" value="aroC"/>
    <property type="match status" value="1"/>
</dbReference>
<dbReference type="NCBIfam" id="NF003793">
    <property type="entry name" value="PRK05382.1"/>
    <property type="match status" value="1"/>
</dbReference>
<dbReference type="PANTHER" id="PTHR21085">
    <property type="entry name" value="CHORISMATE SYNTHASE"/>
    <property type="match status" value="1"/>
</dbReference>
<dbReference type="PANTHER" id="PTHR21085:SF0">
    <property type="entry name" value="CHORISMATE SYNTHASE"/>
    <property type="match status" value="1"/>
</dbReference>
<dbReference type="Pfam" id="PF01264">
    <property type="entry name" value="Chorismate_synt"/>
    <property type="match status" value="1"/>
</dbReference>
<dbReference type="PIRSF" id="PIRSF001456">
    <property type="entry name" value="Chorismate_synth"/>
    <property type="match status" value="1"/>
</dbReference>
<dbReference type="SUPFAM" id="SSF103263">
    <property type="entry name" value="Chorismate synthase, AroC"/>
    <property type="match status" value="1"/>
</dbReference>
<dbReference type="PROSITE" id="PS00787">
    <property type="entry name" value="CHORISMATE_SYNTHASE_1"/>
    <property type="match status" value="1"/>
</dbReference>
<dbReference type="PROSITE" id="PS00788">
    <property type="entry name" value="CHORISMATE_SYNTHASE_2"/>
    <property type="match status" value="1"/>
</dbReference>
<dbReference type="PROSITE" id="PS00789">
    <property type="entry name" value="CHORISMATE_SYNTHASE_3"/>
    <property type="match status" value="1"/>
</dbReference>
<reference key="1">
    <citation type="submission" date="2007-04" db="EMBL/GenBank/DDBJ databases">
        <title>Complete genome sequence of the nitrogen-fixing bacterium Azorhizobium caulinodans ORS571.</title>
        <authorList>
            <person name="Lee K.B."/>
            <person name="Backer P.D."/>
            <person name="Aono T."/>
            <person name="Liu C.T."/>
            <person name="Suzuki S."/>
            <person name="Suzuki T."/>
            <person name="Kaneko T."/>
            <person name="Yamada M."/>
            <person name="Tabata S."/>
            <person name="Kupfer D.M."/>
            <person name="Najar F.Z."/>
            <person name="Wiley G.B."/>
            <person name="Roe B."/>
            <person name="Binnewies T."/>
            <person name="Ussery D."/>
            <person name="Vereecke D."/>
            <person name="Gevers D."/>
            <person name="Holsters M."/>
            <person name="Oyaizu H."/>
        </authorList>
    </citation>
    <scope>NUCLEOTIDE SEQUENCE [LARGE SCALE GENOMIC DNA]</scope>
    <source>
        <strain>ATCC 43989 / DSM 5975 / JCM 20966 / LMG 6465 / NBRC 14845 / NCIMB 13405 / ORS 571</strain>
    </source>
</reference>
<gene>
    <name evidence="1" type="primary">aroC</name>
    <name type="ordered locus">AZC_1749</name>
</gene>
<organism>
    <name type="scientific">Azorhizobium caulinodans (strain ATCC 43989 / DSM 5975 / JCM 20966 / LMG 6465 / NBRC 14845 / NCIMB 13405 / ORS 571)</name>
    <dbReference type="NCBI Taxonomy" id="438753"/>
    <lineage>
        <taxon>Bacteria</taxon>
        <taxon>Pseudomonadati</taxon>
        <taxon>Pseudomonadota</taxon>
        <taxon>Alphaproteobacteria</taxon>
        <taxon>Hyphomicrobiales</taxon>
        <taxon>Xanthobacteraceae</taxon>
        <taxon>Azorhizobium</taxon>
    </lineage>
</organism>
<accession>A8I4M5</accession>
<sequence>MSFNTFGHLFRVTTFGESHGPAIGCVVDGCPPGLRFTVDEVQAALDRRRPGQSRFTTQRREPDQVRVISGTMDHPEGGLVTTGTPIGLLIENVDQRSKDYADIAGSYRPGHADVTYDLKYGLRDHRGGGRSSARETAMRVAAGAIAAKVLPGVTVRAALTRIGEIEIDRARWDWAQVSENPFFCPDPETVPVWTDYLDGIRKRGSSVGAVIEVVAEGVPAGLGAPIYGKLDADLAAAFMSINAVKGVEIGEGFNAARLTGEENADEMRTGNDGRPYFLSNHAGGILGGISSGEPVVARFAVKPTSSILTPRRTVDKFGTEEDLITKGRHDPCVGIRAVPVGEAMMLCVLADHLLRHRGQVGTTPVWPFQRG</sequence>
<evidence type="ECO:0000255" key="1">
    <source>
        <dbReference type="HAMAP-Rule" id="MF_00300"/>
    </source>
</evidence>
<comment type="function">
    <text evidence="1">Catalyzes the anti-1,4-elimination of the C-3 phosphate and the C-6 proR hydrogen from 5-enolpyruvylshikimate-3-phosphate (EPSP) to yield chorismate, which is the branch point compound that serves as the starting substrate for the three terminal pathways of aromatic amino acid biosynthesis. This reaction introduces a second double bond into the aromatic ring system.</text>
</comment>
<comment type="catalytic activity">
    <reaction evidence="1">
        <text>5-O-(1-carboxyvinyl)-3-phosphoshikimate = chorismate + phosphate</text>
        <dbReference type="Rhea" id="RHEA:21020"/>
        <dbReference type="ChEBI" id="CHEBI:29748"/>
        <dbReference type="ChEBI" id="CHEBI:43474"/>
        <dbReference type="ChEBI" id="CHEBI:57701"/>
        <dbReference type="EC" id="4.2.3.5"/>
    </reaction>
</comment>
<comment type="cofactor">
    <cofactor evidence="1">
        <name>FMNH2</name>
        <dbReference type="ChEBI" id="CHEBI:57618"/>
    </cofactor>
    <text evidence="1">Reduced FMN (FMNH(2)).</text>
</comment>
<comment type="pathway">
    <text evidence="1">Metabolic intermediate biosynthesis; chorismate biosynthesis; chorismate from D-erythrose 4-phosphate and phosphoenolpyruvate: step 7/7.</text>
</comment>
<comment type="subunit">
    <text evidence="1">Homotetramer.</text>
</comment>
<comment type="similarity">
    <text evidence="1">Belongs to the chorismate synthase family.</text>
</comment>
<proteinExistence type="inferred from homology"/>
<name>AROC_AZOC5</name>
<keyword id="KW-0028">Amino-acid biosynthesis</keyword>
<keyword id="KW-0057">Aromatic amino acid biosynthesis</keyword>
<keyword id="KW-0274">FAD</keyword>
<keyword id="KW-0285">Flavoprotein</keyword>
<keyword id="KW-0288">FMN</keyword>
<keyword id="KW-0456">Lyase</keyword>
<keyword id="KW-0521">NADP</keyword>
<keyword id="KW-1185">Reference proteome</keyword>
<feature type="chain" id="PRO_1000071967" description="Chorismate synthase">
    <location>
        <begin position="1"/>
        <end position="371"/>
    </location>
</feature>
<feature type="binding site" evidence="1">
    <location>
        <position position="48"/>
    </location>
    <ligand>
        <name>NADP(+)</name>
        <dbReference type="ChEBI" id="CHEBI:58349"/>
    </ligand>
</feature>
<feature type="binding site" evidence="1">
    <location>
        <position position="54"/>
    </location>
    <ligand>
        <name>NADP(+)</name>
        <dbReference type="ChEBI" id="CHEBI:58349"/>
    </ligand>
</feature>
<feature type="binding site" evidence="1">
    <location>
        <begin position="130"/>
        <end position="132"/>
    </location>
    <ligand>
        <name>FMN</name>
        <dbReference type="ChEBI" id="CHEBI:58210"/>
    </ligand>
</feature>
<feature type="binding site" evidence="1">
    <location>
        <begin position="242"/>
        <end position="243"/>
    </location>
    <ligand>
        <name>FMN</name>
        <dbReference type="ChEBI" id="CHEBI:58210"/>
    </ligand>
</feature>
<feature type="binding site" evidence="1">
    <location>
        <position position="287"/>
    </location>
    <ligand>
        <name>FMN</name>
        <dbReference type="ChEBI" id="CHEBI:58210"/>
    </ligand>
</feature>
<feature type="binding site" evidence="1">
    <location>
        <begin position="302"/>
        <end position="306"/>
    </location>
    <ligand>
        <name>FMN</name>
        <dbReference type="ChEBI" id="CHEBI:58210"/>
    </ligand>
</feature>
<feature type="binding site" evidence="1">
    <location>
        <position position="328"/>
    </location>
    <ligand>
        <name>FMN</name>
        <dbReference type="ChEBI" id="CHEBI:58210"/>
    </ligand>
</feature>
<protein>
    <recommendedName>
        <fullName evidence="1">Chorismate synthase</fullName>
        <shortName evidence="1">CS</shortName>
        <ecNumber evidence="1">4.2.3.5</ecNumber>
    </recommendedName>
    <alternativeName>
        <fullName evidence="1">5-enolpyruvylshikimate-3-phosphate phospholyase</fullName>
    </alternativeName>
</protein>